<name>ILVC_SACI1</name>
<dbReference type="EC" id="1.1.1.86" evidence="1"/>
<dbReference type="EMBL" id="CP001404">
    <property type="protein sequence ID" value="ACP48372.1"/>
    <property type="molecule type" value="Genomic_DNA"/>
</dbReference>
<dbReference type="RefSeq" id="WP_012717397.1">
    <property type="nucleotide sequence ID" value="NC_012623.1"/>
</dbReference>
<dbReference type="SMR" id="C3NGW2"/>
<dbReference type="GeneID" id="7810936"/>
<dbReference type="KEGG" id="sin:YN1551_1277"/>
<dbReference type="HOGENOM" id="CLU_033821_0_1_2"/>
<dbReference type="UniPathway" id="UPA00047">
    <property type="reaction ID" value="UER00056"/>
</dbReference>
<dbReference type="UniPathway" id="UPA00049">
    <property type="reaction ID" value="UER00060"/>
</dbReference>
<dbReference type="Proteomes" id="UP000006818">
    <property type="component" value="Chromosome"/>
</dbReference>
<dbReference type="GO" id="GO:0004455">
    <property type="term" value="F:ketol-acid reductoisomerase activity"/>
    <property type="evidence" value="ECO:0007669"/>
    <property type="project" value="UniProtKB-UniRule"/>
</dbReference>
<dbReference type="GO" id="GO:0000287">
    <property type="term" value="F:magnesium ion binding"/>
    <property type="evidence" value="ECO:0007669"/>
    <property type="project" value="UniProtKB-UniRule"/>
</dbReference>
<dbReference type="GO" id="GO:0050661">
    <property type="term" value="F:NADP binding"/>
    <property type="evidence" value="ECO:0007669"/>
    <property type="project" value="InterPro"/>
</dbReference>
<dbReference type="GO" id="GO:0009097">
    <property type="term" value="P:isoleucine biosynthetic process"/>
    <property type="evidence" value="ECO:0007669"/>
    <property type="project" value="UniProtKB-UniRule"/>
</dbReference>
<dbReference type="GO" id="GO:0009099">
    <property type="term" value="P:L-valine biosynthetic process"/>
    <property type="evidence" value="ECO:0007669"/>
    <property type="project" value="UniProtKB-UniRule"/>
</dbReference>
<dbReference type="FunFam" id="3.40.50.720:FF:000023">
    <property type="entry name" value="Ketol-acid reductoisomerase (NADP(+))"/>
    <property type="match status" value="1"/>
</dbReference>
<dbReference type="Gene3D" id="6.10.240.10">
    <property type="match status" value="1"/>
</dbReference>
<dbReference type="Gene3D" id="3.40.50.720">
    <property type="entry name" value="NAD(P)-binding Rossmann-like Domain"/>
    <property type="match status" value="1"/>
</dbReference>
<dbReference type="HAMAP" id="MF_00435">
    <property type="entry name" value="IlvC"/>
    <property type="match status" value="1"/>
</dbReference>
<dbReference type="InterPro" id="IPR008927">
    <property type="entry name" value="6-PGluconate_DH-like_C_sf"/>
</dbReference>
<dbReference type="InterPro" id="IPR013023">
    <property type="entry name" value="KARI"/>
</dbReference>
<dbReference type="InterPro" id="IPR000506">
    <property type="entry name" value="KARI_C"/>
</dbReference>
<dbReference type="InterPro" id="IPR013116">
    <property type="entry name" value="KARI_N"/>
</dbReference>
<dbReference type="InterPro" id="IPR014359">
    <property type="entry name" value="KARI_prok"/>
</dbReference>
<dbReference type="InterPro" id="IPR036291">
    <property type="entry name" value="NAD(P)-bd_dom_sf"/>
</dbReference>
<dbReference type="NCBIfam" id="TIGR00465">
    <property type="entry name" value="ilvC"/>
    <property type="match status" value="1"/>
</dbReference>
<dbReference type="NCBIfam" id="NF004017">
    <property type="entry name" value="PRK05479.1"/>
    <property type="match status" value="1"/>
</dbReference>
<dbReference type="PANTHER" id="PTHR21371">
    <property type="entry name" value="KETOL-ACID REDUCTOISOMERASE, MITOCHONDRIAL"/>
    <property type="match status" value="1"/>
</dbReference>
<dbReference type="PANTHER" id="PTHR21371:SF1">
    <property type="entry name" value="KETOL-ACID REDUCTOISOMERASE, MITOCHONDRIAL"/>
    <property type="match status" value="1"/>
</dbReference>
<dbReference type="Pfam" id="PF01450">
    <property type="entry name" value="KARI_C"/>
    <property type="match status" value="1"/>
</dbReference>
<dbReference type="Pfam" id="PF07991">
    <property type="entry name" value="KARI_N"/>
    <property type="match status" value="1"/>
</dbReference>
<dbReference type="PIRSF" id="PIRSF000116">
    <property type="entry name" value="IlvC_gammaproteo"/>
    <property type="match status" value="1"/>
</dbReference>
<dbReference type="SUPFAM" id="SSF48179">
    <property type="entry name" value="6-phosphogluconate dehydrogenase C-terminal domain-like"/>
    <property type="match status" value="1"/>
</dbReference>
<dbReference type="SUPFAM" id="SSF51735">
    <property type="entry name" value="NAD(P)-binding Rossmann-fold domains"/>
    <property type="match status" value="1"/>
</dbReference>
<dbReference type="PROSITE" id="PS51851">
    <property type="entry name" value="KARI_C"/>
    <property type="match status" value="1"/>
</dbReference>
<dbReference type="PROSITE" id="PS51850">
    <property type="entry name" value="KARI_N"/>
    <property type="match status" value="1"/>
</dbReference>
<accession>C3NGW2</accession>
<gene>
    <name evidence="1" type="primary">ilvC</name>
    <name type="ordered locus">YN1551_1277</name>
</gene>
<reference key="1">
    <citation type="journal article" date="2009" name="Proc. Natl. Acad. Sci. U.S.A.">
        <title>Biogeography of the Sulfolobus islandicus pan-genome.</title>
        <authorList>
            <person name="Reno M.L."/>
            <person name="Held N.L."/>
            <person name="Fields C.J."/>
            <person name="Burke P.V."/>
            <person name="Whitaker R.J."/>
        </authorList>
    </citation>
    <scope>NUCLEOTIDE SEQUENCE [LARGE SCALE GENOMIC DNA]</scope>
    <source>
        <strain>Y.N.15.51 / Yellowstone #2</strain>
    </source>
</reference>
<sequence>MKSTSKIYTDKDSNLDVIKGKRIAVLGYGSQGRAWAQNLRDSGLNVVVGLEREGKSWELAKSDGIIPLHTKDAVKDADIIVFLVPDMVQRTLWLESVQPYMKKGADLVFAHGFNIHYKLIEPPKDSDVYMIAPKGPGPTVREYYKAGGGVPALVAIQQDVSGTALQKALAIAKGIGATRAGVIPTTFKEETETDLFGEQVILVGGIMELMKAAFETLVEEGYQPEVAYFETINELKMLVDLVYEKGITGMVKAVSDTAKYGGMTVGKFVINEDVRKRMKEALQRIKSGKFAEEWVEEYGRGMPTVVNGLSQVQNSLEEKIGNQLKDLIQKGKPKKS</sequence>
<proteinExistence type="inferred from homology"/>
<protein>
    <recommendedName>
        <fullName evidence="1">Ketol-acid reductoisomerase (NADP(+))</fullName>
        <shortName evidence="1">KARI</shortName>
        <ecNumber evidence="1">1.1.1.86</ecNumber>
    </recommendedName>
    <alternativeName>
        <fullName evidence="1">Acetohydroxy-acid isomeroreductase</fullName>
        <shortName evidence="1">AHIR</shortName>
    </alternativeName>
    <alternativeName>
        <fullName evidence="1">Alpha-keto-beta-hydroxylacyl reductoisomerase</fullName>
    </alternativeName>
    <alternativeName>
        <fullName evidence="1">Ketol-acid reductoisomerase type 1</fullName>
    </alternativeName>
    <alternativeName>
        <fullName evidence="1">Ketol-acid reductoisomerase type I</fullName>
    </alternativeName>
</protein>
<organism>
    <name type="scientific">Saccharolobus islandicus (strain Y.N.15.51 / Yellowstone #2)</name>
    <name type="common">Sulfolobus islandicus</name>
    <dbReference type="NCBI Taxonomy" id="419942"/>
    <lineage>
        <taxon>Archaea</taxon>
        <taxon>Thermoproteota</taxon>
        <taxon>Thermoprotei</taxon>
        <taxon>Sulfolobales</taxon>
        <taxon>Sulfolobaceae</taxon>
        <taxon>Saccharolobus</taxon>
    </lineage>
</organism>
<feature type="chain" id="PRO_1000206092" description="Ketol-acid reductoisomerase (NADP(+))">
    <location>
        <begin position="1"/>
        <end position="336"/>
    </location>
</feature>
<feature type="domain" description="KARI N-terminal Rossmann" evidence="2">
    <location>
        <begin position="5"/>
        <end position="185"/>
    </location>
</feature>
<feature type="domain" description="KARI C-terminal knotted" evidence="3">
    <location>
        <begin position="186"/>
        <end position="331"/>
    </location>
</feature>
<feature type="active site" evidence="1">
    <location>
        <position position="111"/>
    </location>
</feature>
<feature type="binding site" evidence="1">
    <location>
        <begin position="28"/>
        <end position="31"/>
    </location>
    <ligand>
        <name>NADP(+)</name>
        <dbReference type="ChEBI" id="CHEBI:58349"/>
    </ligand>
</feature>
<feature type="binding site" evidence="1">
    <location>
        <position position="56"/>
    </location>
    <ligand>
        <name>NADP(+)</name>
        <dbReference type="ChEBI" id="CHEBI:58349"/>
    </ligand>
</feature>
<feature type="binding site" evidence="1">
    <location>
        <begin position="86"/>
        <end position="89"/>
    </location>
    <ligand>
        <name>NADP(+)</name>
        <dbReference type="ChEBI" id="CHEBI:58349"/>
    </ligand>
</feature>
<feature type="binding site" evidence="1">
    <location>
        <position position="137"/>
    </location>
    <ligand>
        <name>NADP(+)</name>
        <dbReference type="ChEBI" id="CHEBI:58349"/>
    </ligand>
</feature>
<feature type="binding site" evidence="1">
    <location>
        <position position="194"/>
    </location>
    <ligand>
        <name>Mg(2+)</name>
        <dbReference type="ChEBI" id="CHEBI:18420"/>
        <label>1</label>
    </ligand>
</feature>
<feature type="binding site" evidence="1">
    <location>
        <position position="194"/>
    </location>
    <ligand>
        <name>Mg(2+)</name>
        <dbReference type="ChEBI" id="CHEBI:18420"/>
        <label>2</label>
    </ligand>
</feature>
<feature type="binding site" evidence="1">
    <location>
        <position position="198"/>
    </location>
    <ligand>
        <name>Mg(2+)</name>
        <dbReference type="ChEBI" id="CHEBI:18420"/>
        <label>1</label>
    </ligand>
</feature>
<feature type="binding site" evidence="1">
    <location>
        <position position="230"/>
    </location>
    <ligand>
        <name>Mg(2+)</name>
        <dbReference type="ChEBI" id="CHEBI:18420"/>
        <label>2</label>
    </ligand>
</feature>
<feature type="binding site" evidence="1">
    <location>
        <position position="234"/>
    </location>
    <ligand>
        <name>Mg(2+)</name>
        <dbReference type="ChEBI" id="CHEBI:18420"/>
        <label>2</label>
    </ligand>
</feature>
<feature type="binding site" evidence="1">
    <location>
        <position position="255"/>
    </location>
    <ligand>
        <name>substrate</name>
    </ligand>
</feature>
<keyword id="KW-0028">Amino-acid biosynthesis</keyword>
<keyword id="KW-0100">Branched-chain amino acid biosynthesis</keyword>
<keyword id="KW-0460">Magnesium</keyword>
<keyword id="KW-0479">Metal-binding</keyword>
<keyword id="KW-0521">NADP</keyword>
<keyword id="KW-0560">Oxidoreductase</keyword>
<evidence type="ECO:0000255" key="1">
    <source>
        <dbReference type="HAMAP-Rule" id="MF_00435"/>
    </source>
</evidence>
<evidence type="ECO:0000255" key="2">
    <source>
        <dbReference type="PROSITE-ProRule" id="PRU01197"/>
    </source>
</evidence>
<evidence type="ECO:0000255" key="3">
    <source>
        <dbReference type="PROSITE-ProRule" id="PRU01198"/>
    </source>
</evidence>
<comment type="function">
    <text evidence="1">Involved in the biosynthesis of branched-chain amino acids (BCAA). Catalyzes an alkyl-migration followed by a ketol-acid reduction of (S)-2-acetolactate (S2AL) to yield (R)-2,3-dihydroxy-isovalerate. In the isomerase reaction, S2AL is rearranged via a Mg-dependent methyl migration to produce 3-hydroxy-3-methyl-2-ketobutyrate (HMKB). In the reductase reaction, this 2-ketoacid undergoes a metal-dependent reduction by NADPH to yield (R)-2,3-dihydroxy-isovalerate.</text>
</comment>
<comment type="catalytic activity">
    <reaction evidence="1">
        <text>(2R)-2,3-dihydroxy-3-methylbutanoate + NADP(+) = (2S)-2-acetolactate + NADPH + H(+)</text>
        <dbReference type="Rhea" id="RHEA:22068"/>
        <dbReference type="ChEBI" id="CHEBI:15378"/>
        <dbReference type="ChEBI" id="CHEBI:49072"/>
        <dbReference type="ChEBI" id="CHEBI:57783"/>
        <dbReference type="ChEBI" id="CHEBI:58349"/>
        <dbReference type="ChEBI" id="CHEBI:58476"/>
        <dbReference type="EC" id="1.1.1.86"/>
    </reaction>
</comment>
<comment type="catalytic activity">
    <reaction evidence="1">
        <text>(2R,3R)-2,3-dihydroxy-3-methylpentanoate + NADP(+) = (S)-2-ethyl-2-hydroxy-3-oxobutanoate + NADPH + H(+)</text>
        <dbReference type="Rhea" id="RHEA:13493"/>
        <dbReference type="ChEBI" id="CHEBI:15378"/>
        <dbReference type="ChEBI" id="CHEBI:49256"/>
        <dbReference type="ChEBI" id="CHEBI:49258"/>
        <dbReference type="ChEBI" id="CHEBI:57783"/>
        <dbReference type="ChEBI" id="CHEBI:58349"/>
        <dbReference type="EC" id="1.1.1.86"/>
    </reaction>
</comment>
<comment type="cofactor">
    <cofactor evidence="1">
        <name>Mg(2+)</name>
        <dbReference type="ChEBI" id="CHEBI:18420"/>
    </cofactor>
    <text evidence="1">Binds 2 magnesium ions per subunit.</text>
</comment>
<comment type="pathway">
    <text evidence="1">Amino-acid biosynthesis; L-isoleucine biosynthesis; L-isoleucine from 2-oxobutanoate: step 2/4.</text>
</comment>
<comment type="pathway">
    <text evidence="1">Amino-acid biosynthesis; L-valine biosynthesis; L-valine from pyruvate: step 2/4.</text>
</comment>
<comment type="similarity">
    <text evidence="1">Belongs to the ketol-acid reductoisomerase family.</text>
</comment>